<comment type="function">
    <text evidence="1">Located on the platform of the 30S subunit.</text>
</comment>
<comment type="subunit">
    <text evidence="1">Part of the 30S ribosomal subunit.</text>
</comment>
<comment type="similarity">
    <text evidence="1">Belongs to the universal ribosomal protein uS11 family.</text>
</comment>
<sequence>MSEKWGVIHIYASYNNTIIHVTDITGAETIAKISGGMIVKNQKDESSPYAAMQGAFKIADMIREKGIDKVHIKVRATGGSKSKNPGPGAQAAIRALARAGIKIGRIEDATPIPHDGTTPKKGNR</sequence>
<accession>A6UW04</accession>
<proteinExistence type="inferred from homology"/>
<reference key="1">
    <citation type="submission" date="2007-06" db="EMBL/GenBank/DDBJ databases">
        <title>Complete sequence of Methanococcus aeolicus Nankai-3.</title>
        <authorList>
            <consortium name="US DOE Joint Genome Institute"/>
            <person name="Copeland A."/>
            <person name="Lucas S."/>
            <person name="Lapidus A."/>
            <person name="Barry K."/>
            <person name="Glavina del Rio T."/>
            <person name="Dalin E."/>
            <person name="Tice H."/>
            <person name="Pitluck S."/>
            <person name="Chain P."/>
            <person name="Malfatti S."/>
            <person name="Shin M."/>
            <person name="Vergez L."/>
            <person name="Schmutz J."/>
            <person name="Larimer F."/>
            <person name="Land M."/>
            <person name="Hauser L."/>
            <person name="Kyrpides N."/>
            <person name="Lykidis A."/>
            <person name="Sieprawska-Lupa M."/>
            <person name="Whitman W.B."/>
            <person name="Richardson P."/>
        </authorList>
    </citation>
    <scope>NUCLEOTIDE SEQUENCE [LARGE SCALE GENOMIC DNA]</scope>
    <source>
        <strain>ATCC BAA-1280 / DSM 17508 / OCM 812 / Nankai-3</strain>
    </source>
</reference>
<evidence type="ECO:0000255" key="1">
    <source>
        <dbReference type="HAMAP-Rule" id="MF_01310"/>
    </source>
</evidence>
<evidence type="ECO:0000305" key="2"/>
<keyword id="KW-0687">Ribonucleoprotein</keyword>
<keyword id="KW-0689">Ribosomal protein</keyword>
<keyword id="KW-0694">RNA-binding</keyword>
<keyword id="KW-0699">rRNA-binding</keyword>
<dbReference type="EMBL" id="CP000743">
    <property type="protein sequence ID" value="ABR56676.1"/>
    <property type="molecule type" value="Genomic_DNA"/>
</dbReference>
<dbReference type="RefSeq" id="WP_011973808.1">
    <property type="nucleotide sequence ID" value="NC_009635.1"/>
</dbReference>
<dbReference type="SMR" id="A6UW04"/>
<dbReference type="STRING" id="419665.Maeo_1099"/>
<dbReference type="GeneID" id="5326834"/>
<dbReference type="KEGG" id="mae:Maeo_1099"/>
<dbReference type="eggNOG" id="arCOG04240">
    <property type="taxonomic scope" value="Archaea"/>
</dbReference>
<dbReference type="HOGENOM" id="CLU_072439_6_1_2"/>
<dbReference type="OrthoDB" id="12054at2157"/>
<dbReference type="Proteomes" id="UP000001106">
    <property type="component" value="Chromosome"/>
</dbReference>
<dbReference type="GO" id="GO:1990904">
    <property type="term" value="C:ribonucleoprotein complex"/>
    <property type="evidence" value="ECO:0007669"/>
    <property type="project" value="UniProtKB-KW"/>
</dbReference>
<dbReference type="GO" id="GO:0005840">
    <property type="term" value="C:ribosome"/>
    <property type="evidence" value="ECO:0007669"/>
    <property type="project" value="UniProtKB-KW"/>
</dbReference>
<dbReference type="GO" id="GO:0019843">
    <property type="term" value="F:rRNA binding"/>
    <property type="evidence" value="ECO:0007669"/>
    <property type="project" value="UniProtKB-UniRule"/>
</dbReference>
<dbReference type="GO" id="GO:0003735">
    <property type="term" value="F:structural constituent of ribosome"/>
    <property type="evidence" value="ECO:0007669"/>
    <property type="project" value="InterPro"/>
</dbReference>
<dbReference type="GO" id="GO:0006412">
    <property type="term" value="P:translation"/>
    <property type="evidence" value="ECO:0007669"/>
    <property type="project" value="UniProtKB-UniRule"/>
</dbReference>
<dbReference type="FunFam" id="3.30.420.80:FF:000007">
    <property type="entry name" value="30S ribosomal protein S11"/>
    <property type="match status" value="1"/>
</dbReference>
<dbReference type="Gene3D" id="3.30.420.80">
    <property type="entry name" value="Ribosomal protein S11"/>
    <property type="match status" value="1"/>
</dbReference>
<dbReference type="HAMAP" id="MF_01310">
    <property type="entry name" value="Ribosomal_uS11"/>
    <property type="match status" value="1"/>
</dbReference>
<dbReference type="InterPro" id="IPR001971">
    <property type="entry name" value="Ribosomal_uS11"/>
</dbReference>
<dbReference type="InterPro" id="IPR019961">
    <property type="entry name" value="Ribosomal_uS11_archaeal"/>
</dbReference>
<dbReference type="InterPro" id="IPR018102">
    <property type="entry name" value="Ribosomal_uS11_CS"/>
</dbReference>
<dbReference type="InterPro" id="IPR036967">
    <property type="entry name" value="Ribosomal_uS11_sf"/>
</dbReference>
<dbReference type="NCBIfam" id="TIGR03628">
    <property type="entry name" value="arch_S11P"/>
    <property type="match status" value="1"/>
</dbReference>
<dbReference type="NCBIfam" id="NF007176">
    <property type="entry name" value="PRK09607.1"/>
    <property type="match status" value="1"/>
</dbReference>
<dbReference type="PANTHER" id="PTHR11759">
    <property type="entry name" value="40S RIBOSOMAL PROTEIN S14/30S RIBOSOMAL PROTEIN S11"/>
    <property type="match status" value="1"/>
</dbReference>
<dbReference type="Pfam" id="PF00411">
    <property type="entry name" value="Ribosomal_S11"/>
    <property type="match status" value="1"/>
</dbReference>
<dbReference type="PIRSF" id="PIRSF002131">
    <property type="entry name" value="Ribosomal_S11"/>
    <property type="match status" value="1"/>
</dbReference>
<dbReference type="SUPFAM" id="SSF53137">
    <property type="entry name" value="Translational machinery components"/>
    <property type="match status" value="1"/>
</dbReference>
<dbReference type="PROSITE" id="PS00054">
    <property type="entry name" value="RIBOSOMAL_S11"/>
    <property type="match status" value="1"/>
</dbReference>
<feature type="chain" id="PRO_0000323351" description="Small ribosomal subunit protein uS11">
    <location>
        <begin position="1"/>
        <end position="124"/>
    </location>
</feature>
<organism>
    <name type="scientific">Methanococcus aeolicus (strain ATCC BAA-1280 / DSM 17508 / OCM 812 / Nankai-3)</name>
    <dbReference type="NCBI Taxonomy" id="419665"/>
    <lineage>
        <taxon>Archaea</taxon>
        <taxon>Methanobacteriati</taxon>
        <taxon>Methanobacteriota</taxon>
        <taxon>Methanomada group</taxon>
        <taxon>Methanococci</taxon>
        <taxon>Methanococcales</taxon>
        <taxon>Methanococcaceae</taxon>
        <taxon>Methanococcus</taxon>
    </lineage>
</organism>
<gene>
    <name evidence="1" type="primary">rps11</name>
    <name type="ordered locus">Maeo_1099</name>
</gene>
<protein>
    <recommendedName>
        <fullName evidence="1">Small ribosomal subunit protein uS11</fullName>
    </recommendedName>
    <alternativeName>
        <fullName evidence="2">30S ribosomal protein S11</fullName>
    </alternativeName>
</protein>
<name>RS11_META3</name>